<reference key="1">
    <citation type="journal article" date="2006" name="Proc. Natl. Acad. Sci. U.S.A.">
        <title>Identification of genes subject to positive selection in uropathogenic strains of Escherichia coli: a comparative genomics approach.</title>
        <authorList>
            <person name="Chen S.L."/>
            <person name="Hung C.-S."/>
            <person name="Xu J."/>
            <person name="Reigstad C.S."/>
            <person name="Magrini V."/>
            <person name="Sabo A."/>
            <person name="Blasiar D."/>
            <person name="Bieri T."/>
            <person name="Meyer R.R."/>
            <person name="Ozersky P."/>
            <person name="Armstrong J.R."/>
            <person name="Fulton R.S."/>
            <person name="Latreille J.P."/>
            <person name="Spieth J."/>
            <person name="Hooton T.M."/>
            <person name="Mardis E.R."/>
            <person name="Hultgren S.J."/>
            <person name="Gordon J.I."/>
        </authorList>
    </citation>
    <scope>NUCLEOTIDE SEQUENCE [LARGE SCALE GENOMIC DNA]</scope>
    <source>
        <strain>UTI89 / UPEC</strain>
    </source>
</reference>
<comment type="function">
    <text evidence="1">Conversion of NADPH, generated by peripheral catabolic pathways, to NADH, which can enter the respiratory chain for energy generation.</text>
</comment>
<comment type="catalytic activity">
    <reaction evidence="1">
        <text>NAD(+) + NADPH = NADH + NADP(+)</text>
        <dbReference type="Rhea" id="RHEA:11692"/>
        <dbReference type="ChEBI" id="CHEBI:57540"/>
        <dbReference type="ChEBI" id="CHEBI:57783"/>
        <dbReference type="ChEBI" id="CHEBI:57945"/>
        <dbReference type="ChEBI" id="CHEBI:58349"/>
        <dbReference type="EC" id="1.6.1.1"/>
    </reaction>
</comment>
<comment type="cofactor">
    <cofactor evidence="1">
        <name>FAD</name>
        <dbReference type="ChEBI" id="CHEBI:57692"/>
    </cofactor>
    <text evidence="1">Binds 1 FAD per subunit.</text>
</comment>
<comment type="subcellular location">
    <subcellularLocation>
        <location evidence="1">Cytoplasm</location>
    </subcellularLocation>
</comment>
<comment type="similarity">
    <text evidence="1">Belongs to the class-I pyridine nucleotide-disulfide oxidoreductase family.</text>
</comment>
<sequence length="466" mass="51560">MPHSYDYDAIVIGSGPGGEGAAMGLVKQGARVAVIERYQNVGGGCTHWGTIPSKALRHAVSRIIEFNQNPLYSDHSRLLRSSFADILNHADNVINQQTRMRQGFYERNHCEILQGNARFVDEHTLALDCPDGSVETLTAEKFVIACGSRPYHPTDVDFTHPRIYDSDSILSMHHEPRHVLIYGAGVIGCEYASIFRGMDVKVDLINTRDRLLAFLDQEMSDSLSYHFWNSGVVIRHNEEYEKIEGCDDGVIMHLKSGKKLKADCLLYANGRTGNTDSLALQNIGLETDSRGQLKVNSMYQTAQPHVYAVGDVIGYPSLASAAYDQGRIAAQALVKGEATAHLIEDIPTGIYTIPEISSVGKTEQQLTAMKVPYEVGRAQFKHLARAQIVGMNVGTLKILFHRETKEILGIHCFGERAAEIIHIGQAIMEQKGGGNTIEYFVNTTFNYPTMAEAYRVAALNGLNRLF</sequence>
<keyword id="KW-0963">Cytoplasm</keyword>
<keyword id="KW-0274">FAD</keyword>
<keyword id="KW-0285">Flavoprotein</keyword>
<keyword id="KW-0520">NAD</keyword>
<keyword id="KW-0521">NADP</keyword>
<keyword id="KW-0560">Oxidoreductase</keyword>
<organism>
    <name type="scientific">Escherichia coli (strain UTI89 / UPEC)</name>
    <dbReference type="NCBI Taxonomy" id="364106"/>
    <lineage>
        <taxon>Bacteria</taxon>
        <taxon>Pseudomonadati</taxon>
        <taxon>Pseudomonadota</taxon>
        <taxon>Gammaproteobacteria</taxon>
        <taxon>Enterobacterales</taxon>
        <taxon>Enterobacteriaceae</taxon>
        <taxon>Escherichia</taxon>
    </lineage>
</organism>
<dbReference type="EC" id="1.6.1.1" evidence="1"/>
<dbReference type="EMBL" id="CP000243">
    <property type="protein sequence ID" value="ABE09967.1"/>
    <property type="molecule type" value="Genomic_DNA"/>
</dbReference>
<dbReference type="RefSeq" id="WP_001120810.1">
    <property type="nucleotide sequence ID" value="NZ_CP064825.1"/>
</dbReference>
<dbReference type="SMR" id="Q1R3U7"/>
<dbReference type="GeneID" id="75203206"/>
<dbReference type="KEGG" id="eci:UTI89_C4555"/>
<dbReference type="HOGENOM" id="CLU_016755_0_0_6"/>
<dbReference type="Proteomes" id="UP000001952">
    <property type="component" value="Chromosome"/>
</dbReference>
<dbReference type="GO" id="GO:0005829">
    <property type="term" value="C:cytosol"/>
    <property type="evidence" value="ECO:0007669"/>
    <property type="project" value="TreeGrafter"/>
</dbReference>
<dbReference type="GO" id="GO:0004148">
    <property type="term" value="F:dihydrolipoyl dehydrogenase (NADH) activity"/>
    <property type="evidence" value="ECO:0007669"/>
    <property type="project" value="TreeGrafter"/>
</dbReference>
<dbReference type="GO" id="GO:0050660">
    <property type="term" value="F:flavin adenine dinucleotide binding"/>
    <property type="evidence" value="ECO:0007669"/>
    <property type="project" value="TreeGrafter"/>
</dbReference>
<dbReference type="GO" id="GO:0003957">
    <property type="term" value="F:NAD(P)+ transhydrogenase (Si-specific) activity"/>
    <property type="evidence" value="ECO:0007669"/>
    <property type="project" value="UniProtKB-UniRule"/>
</dbReference>
<dbReference type="GO" id="GO:0006103">
    <property type="term" value="P:2-oxoglutarate metabolic process"/>
    <property type="evidence" value="ECO:0007669"/>
    <property type="project" value="TreeGrafter"/>
</dbReference>
<dbReference type="GO" id="GO:0006739">
    <property type="term" value="P:NADP metabolic process"/>
    <property type="evidence" value="ECO:0007669"/>
    <property type="project" value="UniProtKB-UniRule"/>
</dbReference>
<dbReference type="FunFam" id="3.30.390.30:FF:000002">
    <property type="entry name" value="Soluble pyridine nucleotide transhydrogenase"/>
    <property type="match status" value="1"/>
</dbReference>
<dbReference type="FunFam" id="3.50.50.60:FF:000008">
    <property type="entry name" value="Soluble pyridine nucleotide transhydrogenase"/>
    <property type="match status" value="1"/>
</dbReference>
<dbReference type="Gene3D" id="3.30.390.30">
    <property type="match status" value="1"/>
</dbReference>
<dbReference type="Gene3D" id="3.50.50.60">
    <property type="entry name" value="FAD/NAD(P)-binding domain"/>
    <property type="match status" value="2"/>
</dbReference>
<dbReference type="HAMAP" id="MF_00247">
    <property type="entry name" value="SthA"/>
    <property type="match status" value="1"/>
</dbReference>
<dbReference type="InterPro" id="IPR050151">
    <property type="entry name" value="Class-I_Pyr_Nuc-Dis_Oxidored"/>
</dbReference>
<dbReference type="InterPro" id="IPR036188">
    <property type="entry name" value="FAD/NAD-bd_sf"/>
</dbReference>
<dbReference type="InterPro" id="IPR023753">
    <property type="entry name" value="FAD/NAD-binding_dom"/>
</dbReference>
<dbReference type="InterPro" id="IPR016156">
    <property type="entry name" value="FAD/NAD-linked_Rdtase_dimer_sf"/>
</dbReference>
<dbReference type="InterPro" id="IPR001100">
    <property type="entry name" value="Pyr_nuc-diS_OxRdtase"/>
</dbReference>
<dbReference type="InterPro" id="IPR004099">
    <property type="entry name" value="Pyr_nucl-diS_OxRdtase_dimer"/>
</dbReference>
<dbReference type="InterPro" id="IPR022962">
    <property type="entry name" value="STH_gammaproteobact"/>
</dbReference>
<dbReference type="NCBIfam" id="NF003585">
    <property type="entry name" value="PRK05249.1"/>
    <property type="match status" value="1"/>
</dbReference>
<dbReference type="PANTHER" id="PTHR22912">
    <property type="entry name" value="DISULFIDE OXIDOREDUCTASE"/>
    <property type="match status" value="1"/>
</dbReference>
<dbReference type="PANTHER" id="PTHR22912:SF93">
    <property type="entry name" value="SOLUBLE PYRIDINE NUCLEOTIDE TRANSHYDROGENASE"/>
    <property type="match status" value="1"/>
</dbReference>
<dbReference type="Pfam" id="PF07992">
    <property type="entry name" value="Pyr_redox_2"/>
    <property type="match status" value="1"/>
</dbReference>
<dbReference type="Pfam" id="PF02852">
    <property type="entry name" value="Pyr_redox_dim"/>
    <property type="match status" value="1"/>
</dbReference>
<dbReference type="PIRSF" id="PIRSF000350">
    <property type="entry name" value="Mercury_reductase_MerA"/>
    <property type="match status" value="1"/>
</dbReference>
<dbReference type="PRINTS" id="PR00368">
    <property type="entry name" value="FADPNR"/>
</dbReference>
<dbReference type="PRINTS" id="PR00411">
    <property type="entry name" value="PNDRDTASEI"/>
</dbReference>
<dbReference type="SUPFAM" id="SSF51905">
    <property type="entry name" value="FAD/NAD(P)-binding domain"/>
    <property type="match status" value="1"/>
</dbReference>
<dbReference type="SUPFAM" id="SSF55424">
    <property type="entry name" value="FAD/NAD-linked reductases, dimerisation (C-terminal) domain"/>
    <property type="match status" value="1"/>
</dbReference>
<feature type="chain" id="PRO_0000260234" description="Soluble pyridine nucleotide transhydrogenase">
    <location>
        <begin position="1"/>
        <end position="466"/>
    </location>
</feature>
<feature type="binding site" evidence="1">
    <location>
        <begin position="36"/>
        <end position="45"/>
    </location>
    <ligand>
        <name>FAD</name>
        <dbReference type="ChEBI" id="CHEBI:57692"/>
    </ligand>
</feature>
<protein>
    <recommendedName>
        <fullName evidence="1">Soluble pyridine nucleotide transhydrogenase</fullName>
        <shortName evidence="1">STH</shortName>
        <ecNumber evidence="1">1.6.1.1</ecNumber>
    </recommendedName>
    <alternativeName>
        <fullName evidence="1">NAD(P)(+) transhydrogenase [B-specific]</fullName>
    </alternativeName>
</protein>
<name>STHA_ECOUT</name>
<evidence type="ECO:0000255" key="1">
    <source>
        <dbReference type="HAMAP-Rule" id="MF_00247"/>
    </source>
</evidence>
<accession>Q1R3U7</accession>
<gene>
    <name evidence="1" type="primary">sthA</name>
    <name evidence="1" type="synonym">udhA</name>
    <name type="ordered locus">UTI89_C4555</name>
</gene>
<proteinExistence type="inferred from homology"/>